<name>DXS_CLOB8</name>
<comment type="function">
    <text evidence="1">Catalyzes the acyloin condensation reaction between C atoms 2 and 3 of pyruvate and glyceraldehyde 3-phosphate to yield 1-deoxy-D-xylulose-5-phosphate (DXP).</text>
</comment>
<comment type="catalytic activity">
    <reaction evidence="1">
        <text>D-glyceraldehyde 3-phosphate + pyruvate + H(+) = 1-deoxy-D-xylulose 5-phosphate + CO2</text>
        <dbReference type="Rhea" id="RHEA:12605"/>
        <dbReference type="ChEBI" id="CHEBI:15361"/>
        <dbReference type="ChEBI" id="CHEBI:15378"/>
        <dbReference type="ChEBI" id="CHEBI:16526"/>
        <dbReference type="ChEBI" id="CHEBI:57792"/>
        <dbReference type="ChEBI" id="CHEBI:59776"/>
        <dbReference type="EC" id="2.2.1.7"/>
    </reaction>
</comment>
<comment type="cofactor">
    <cofactor evidence="1">
        <name>Mg(2+)</name>
        <dbReference type="ChEBI" id="CHEBI:18420"/>
    </cofactor>
    <text evidence="1">Binds 1 Mg(2+) ion per subunit.</text>
</comment>
<comment type="cofactor">
    <cofactor evidence="1">
        <name>thiamine diphosphate</name>
        <dbReference type="ChEBI" id="CHEBI:58937"/>
    </cofactor>
    <text evidence="1">Binds 1 thiamine pyrophosphate per subunit.</text>
</comment>
<comment type="pathway">
    <text evidence="1">Metabolic intermediate biosynthesis; 1-deoxy-D-xylulose 5-phosphate biosynthesis; 1-deoxy-D-xylulose 5-phosphate from D-glyceraldehyde 3-phosphate and pyruvate: step 1/1.</text>
</comment>
<comment type="subunit">
    <text evidence="1">Homodimer.</text>
</comment>
<comment type="similarity">
    <text evidence="1">Belongs to the transketolase family. DXPS subfamily.</text>
</comment>
<sequence>MNLLDKLNFPEDLKKLNEEDYKVLSSEIRKFLIDSVSKTGGHLASNLGVVELTLSLFKAFSFDKDKIVWDVGHQSYIYKILTGRKEGFKKLRKYDGISGFPKRNESKYDYFDTGHSSTSISAALGIARARDLKKEKYNVISVIGDGALTGGMAIEALNDVGFRKTKLIIILNDNQMSISTNVGGLSRYLNKLRIAPVYNKLKTDIHASLDNSNLGKNIAGKISKVKDSIKQLIVPSMFFENMGVKYIGPIDGHDIDAMTEVFIKAKEINEPVIIHILTQKGKGYALAEESPSKYHAVGAFNLESGESNASPKNSYSKAFGKALVNLGAQDEKIVAITAAMPEGTGLKCFSQKFRDRFFDVGIAEEHAVTLAAGMASNGLKPVFAVYSTFLQRAFDQVLHDVCIQNLPVVFAIDRAGIVGEDGETHQGINDLSYLSMIPNIHIVVPKCLEEVDVLLKWAINKNAPVAIRYPKGGNIIDTLSPIKEVVEGQWEIVNRGSKVCIIATGRMVQHAMIAKEFLYEKGLNPTVINATFVKPIDKKLLENIKKEGYNILTIEDNIIKGGLGSAVKDYLSEIDYKGTIRSLGYDDEFIPQGNVEILYKTYKLDYENISKIVMKLYD</sequence>
<protein>
    <recommendedName>
        <fullName evidence="1">1-deoxy-D-xylulose-5-phosphate synthase</fullName>
        <ecNumber evidence="1">2.2.1.7</ecNumber>
    </recommendedName>
    <alternativeName>
        <fullName evidence="1">1-deoxyxylulose-5-phosphate synthase</fullName>
        <shortName evidence="1">DXP synthase</shortName>
        <shortName evidence="1">DXPS</shortName>
    </alternativeName>
</protein>
<accession>A6LU48</accession>
<reference key="1">
    <citation type="submission" date="2007-06" db="EMBL/GenBank/DDBJ databases">
        <title>Complete sequence of Clostridium beijerinckii NCIMB 8052.</title>
        <authorList>
            <consortium name="US DOE Joint Genome Institute"/>
            <person name="Copeland A."/>
            <person name="Lucas S."/>
            <person name="Lapidus A."/>
            <person name="Barry K."/>
            <person name="Detter J.C."/>
            <person name="Glavina del Rio T."/>
            <person name="Hammon N."/>
            <person name="Israni S."/>
            <person name="Dalin E."/>
            <person name="Tice H."/>
            <person name="Pitluck S."/>
            <person name="Sims D."/>
            <person name="Brettin T."/>
            <person name="Bruce D."/>
            <person name="Tapia R."/>
            <person name="Brainard J."/>
            <person name="Schmutz J."/>
            <person name="Larimer F."/>
            <person name="Land M."/>
            <person name="Hauser L."/>
            <person name="Kyrpides N."/>
            <person name="Mikhailova N."/>
            <person name="Bennet G."/>
            <person name="Cann I."/>
            <person name="Chen J.-S."/>
            <person name="Contreras A.L."/>
            <person name="Jones D."/>
            <person name="Kashket E."/>
            <person name="Mitchell W."/>
            <person name="Stoddard S."/>
            <person name="Schwarz W."/>
            <person name="Qureshi N."/>
            <person name="Young M."/>
            <person name="Shi Z."/>
            <person name="Ezeji T."/>
            <person name="White B."/>
            <person name="Blaschek H."/>
            <person name="Richardson P."/>
        </authorList>
    </citation>
    <scope>NUCLEOTIDE SEQUENCE [LARGE SCALE GENOMIC DNA]</scope>
    <source>
        <strain>ATCC 51743 / NCIMB 8052</strain>
    </source>
</reference>
<proteinExistence type="inferred from homology"/>
<evidence type="ECO:0000255" key="1">
    <source>
        <dbReference type="HAMAP-Rule" id="MF_00315"/>
    </source>
</evidence>
<feature type="chain" id="PRO_1000079087" description="1-deoxy-D-xylulose-5-phosphate synthase">
    <location>
        <begin position="1"/>
        <end position="618"/>
    </location>
</feature>
<feature type="binding site" evidence="1">
    <location>
        <position position="73"/>
    </location>
    <ligand>
        <name>thiamine diphosphate</name>
        <dbReference type="ChEBI" id="CHEBI:58937"/>
    </ligand>
</feature>
<feature type="binding site" evidence="1">
    <location>
        <begin position="114"/>
        <end position="116"/>
    </location>
    <ligand>
        <name>thiamine diphosphate</name>
        <dbReference type="ChEBI" id="CHEBI:58937"/>
    </ligand>
</feature>
<feature type="binding site" evidence="1">
    <location>
        <position position="145"/>
    </location>
    <ligand>
        <name>Mg(2+)</name>
        <dbReference type="ChEBI" id="CHEBI:18420"/>
    </ligand>
</feature>
<feature type="binding site" evidence="1">
    <location>
        <begin position="146"/>
        <end position="147"/>
    </location>
    <ligand>
        <name>thiamine diphosphate</name>
        <dbReference type="ChEBI" id="CHEBI:58937"/>
    </ligand>
</feature>
<feature type="binding site" evidence="1">
    <location>
        <position position="174"/>
    </location>
    <ligand>
        <name>Mg(2+)</name>
        <dbReference type="ChEBI" id="CHEBI:18420"/>
    </ligand>
</feature>
<feature type="binding site" evidence="1">
    <location>
        <position position="174"/>
    </location>
    <ligand>
        <name>thiamine diphosphate</name>
        <dbReference type="ChEBI" id="CHEBI:58937"/>
    </ligand>
</feature>
<feature type="binding site" evidence="1">
    <location>
        <position position="284"/>
    </location>
    <ligand>
        <name>thiamine diphosphate</name>
        <dbReference type="ChEBI" id="CHEBI:58937"/>
    </ligand>
</feature>
<feature type="binding site" evidence="1">
    <location>
        <position position="364"/>
    </location>
    <ligand>
        <name>thiamine diphosphate</name>
        <dbReference type="ChEBI" id="CHEBI:58937"/>
    </ligand>
</feature>
<gene>
    <name evidence="1" type="primary">dxs</name>
    <name type="ordered locus">Cbei_1706</name>
</gene>
<keyword id="KW-0414">Isoprene biosynthesis</keyword>
<keyword id="KW-0460">Magnesium</keyword>
<keyword id="KW-0479">Metal-binding</keyword>
<keyword id="KW-0784">Thiamine biosynthesis</keyword>
<keyword id="KW-0786">Thiamine pyrophosphate</keyword>
<keyword id="KW-0808">Transferase</keyword>
<dbReference type="EC" id="2.2.1.7" evidence="1"/>
<dbReference type="EMBL" id="CP000721">
    <property type="protein sequence ID" value="ABR33878.1"/>
    <property type="molecule type" value="Genomic_DNA"/>
</dbReference>
<dbReference type="RefSeq" id="WP_011969030.1">
    <property type="nucleotide sequence ID" value="NC_009617.1"/>
</dbReference>
<dbReference type="SMR" id="A6LU48"/>
<dbReference type="KEGG" id="cbe:Cbei_1706"/>
<dbReference type="eggNOG" id="COG1154">
    <property type="taxonomic scope" value="Bacteria"/>
</dbReference>
<dbReference type="HOGENOM" id="CLU_009227_1_4_9"/>
<dbReference type="UniPathway" id="UPA00064">
    <property type="reaction ID" value="UER00091"/>
</dbReference>
<dbReference type="Proteomes" id="UP000000565">
    <property type="component" value="Chromosome"/>
</dbReference>
<dbReference type="GO" id="GO:0005829">
    <property type="term" value="C:cytosol"/>
    <property type="evidence" value="ECO:0007669"/>
    <property type="project" value="TreeGrafter"/>
</dbReference>
<dbReference type="GO" id="GO:0008661">
    <property type="term" value="F:1-deoxy-D-xylulose-5-phosphate synthase activity"/>
    <property type="evidence" value="ECO:0007669"/>
    <property type="project" value="UniProtKB-UniRule"/>
</dbReference>
<dbReference type="GO" id="GO:0000287">
    <property type="term" value="F:magnesium ion binding"/>
    <property type="evidence" value="ECO:0007669"/>
    <property type="project" value="UniProtKB-UniRule"/>
</dbReference>
<dbReference type="GO" id="GO:0030976">
    <property type="term" value="F:thiamine pyrophosphate binding"/>
    <property type="evidence" value="ECO:0007669"/>
    <property type="project" value="UniProtKB-UniRule"/>
</dbReference>
<dbReference type="GO" id="GO:0052865">
    <property type="term" value="P:1-deoxy-D-xylulose 5-phosphate biosynthetic process"/>
    <property type="evidence" value="ECO:0007669"/>
    <property type="project" value="UniProtKB-UniPathway"/>
</dbReference>
<dbReference type="GO" id="GO:0019288">
    <property type="term" value="P:isopentenyl diphosphate biosynthetic process, methylerythritol 4-phosphate pathway"/>
    <property type="evidence" value="ECO:0007669"/>
    <property type="project" value="TreeGrafter"/>
</dbReference>
<dbReference type="GO" id="GO:0016114">
    <property type="term" value="P:terpenoid biosynthetic process"/>
    <property type="evidence" value="ECO:0007669"/>
    <property type="project" value="UniProtKB-UniRule"/>
</dbReference>
<dbReference type="GO" id="GO:0009228">
    <property type="term" value="P:thiamine biosynthetic process"/>
    <property type="evidence" value="ECO:0007669"/>
    <property type="project" value="UniProtKB-UniRule"/>
</dbReference>
<dbReference type="CDD" id="cd02007">
    <property type="entry name" value="TPP_DXS"/>
    <property type="match status" value="1"/>
</dbReference>
<dbReference type="CDD" id="cd07033">
    <property type="entry name" value="TPP_PYR_DXS_TK_like"/>
    <property type="match status" value="1"/>
</dbReference>
<dbReference type="FunFam" id="3.40.50.970:FF:000005">
    <property type="entry name" value="1-deoxy-D-xylulose-5-phosphate synthase"/>
    <property type="match status" value="1"/>
</dbReference>
<dbReference type="Gene3D" id="3.40.50.920">
    <property type="match status" value="1"/>
</dbReference>
<dbReference type="Gene3D" id="3.40.50.970">
    <property type="match status" value="2"/>
</dbReference>
<dbReference type="HAMAP" id="MF_00315">
    <property type="entry name" value="DXP_synth"/>
    <property type="match status" value="1"/>
</dbReference>
<dbReference type="InterPro" id="IPR005477">
    <property type="entry name" value="Dxylulose-5-P_synthase"/>
</dbReference>
<dbReference type="InterPro" id="IPR029061">
    <property type="entry name" value="THDP-binding"/>
</dbReference>
<dbReference type="InterPro" id="IPR009014">
    <property type="entry name" value="Transketo_C/PFOR_II"/>
</dbReference>
<dbReference type="InterPro" id="IPR005475">
    <property type="entry name" value="Transketolase-like_Pyr-bd"/>
</dbReference>
<dbReference type="InterPro" id="IPR033248">
    <property type="entry name" value="Transketolase_C"/>
</dbReference>
<dbReference type="InterPro" id="IPR049557">
    <property type="entry name" value="Transketolase_CS"/>
</dbReference>
<dbReference type="NCBIfam" id="TIGR00204">
    <property type="entry name" value="dxs"/>
    <property type="match status" value="1"/>
</dbReference>
<dbReference type="NCBIfam" id="NF003933">
    <property type="entry name" value="PRK05444.2-2"/>
    <property type="match status" value="1"/>
</dbReference>
<dbReference type="PANTHER" id="PTHR43322">
    <property type="entry name" value="1-D-DEOXYXYLULOSE 5-PHOSPHATE SYNTHASE-RELATED"/>
    <property type="match status" value="1"/>
</dbReference>
<dbReference type="PANTHER" id="PTHR43322:SF5">
    <property type="entry name" value="1-DEOXY-D-XYLULOSE-5-PHOSPHATE SYNTHASE, CHLOROPLASTIC"/>
    <property type="match status" value="1"/>
</dbReference>
<dbReference type="Pfam" id="PF13292">
    <property type="entry name" value="DXP_synthase_N"/>
    <property type="match status" value="1"/>
</dbReference>
<dbReference type="Pfam" id="PF02779">
    <property type="entry name" value="Transket_pyr"/>
    <property type="match status" value="1"/>
</dbReference>
<dbReference type="Pfam" id="PF02780">
    <property type="entry name" value="Transketolase_C"/>
    <property type="match status" value="1"/>
</dbReference>
<dbReference type="SMART" id="SM00861">
    <property type="entry name" value="Transket_pyr"/>
    <property type="match status" value="1"/>
</dbReference>
<dbReference type="SUPFAM" id="SSF52518">
    <property type="entry name" value="Thiamin diphosphate-binding fold (THDP-binding)"/>
    <property type="match status" value="1"/>
</dbReference>
<dbReference type="SUPFAM" id="SSF52922">
    <property type="entry name" value="TK C-terminal domain-like"/>
    <property type="match status" value="1"/>
</dbReference>
<dbReference type="PROSITE" id="PS00801">
    <property type="entry name" value="TRANSKETOLASE_1"/>
    <property type="match status" value="1"/>
</dbReference>
<organism>
    <name type="scientific">Clostridium beijerinckii (strain ATCC 51743 / NCIMB 8052)</name>
    <name type="common">Clostridium acetobutylicum</name>
    <dbReference type="NCBI Taxonomy" id="290402"/>
    <lineage>
        <taxon>Bacteria</taxon>
        <taxon>Bacillati</taxon>
        <taxon>Bacillota</taxon>
        <taxon>Clostridia</taxon>
        <taxon>Eubacteriales</taxon>
        <taxon>Clostridiaceae</taxon>
        <taxon>Clostridium</taxon>
    </lineage>
</organism>